<sequence>MSNSKDEVERIDWLEAELADTIDEDYELELSEPTLSEKIREIYRKAHPPALPRMDYFRALLALQAELIKLQDWVVYHKQKVVVIFEGRDAAGKGGVIKRITQRLNPRIVRTVALPAPSDREKTQWYFQRYVPHLPAGGEIVLFDRSWYNRCGVERVMGFATEEEVEQFFDDVPEFERMLVRSGVRLVKYWFSITDEEQQLRFLTRIHDPLKQWKLSPMDLQSRVRWEAYTKAKEETFARTNIREAPWHIVEANDKKRARLNCIDHLLKQIPYEDVPHEDITLPERIFNPNYERKVLPPELYVPAKY</sequence>
<protein>
    <recommendedName>
        <fullName evidence="2">ADP-polyphosphate phosphotransferase 2</fullName>
        <ecNumber evidence="1">2.7.4.-</ecNumber>
    </recommendedName>
    <alternativeName>
        <fullName evidence="2">Polyphosphate kinase PPK2 2</fullName>
    </alternativeName>
</protein>
<feature type="chain" id="PRO_0000442590" description="ADP-polyphosphate phosphotransferase 2">
    <location>
        <begin position="1"/>
        <end position="306"/>
    </location>
</feature>
<comment type="function">
    <text evidence="1">Uses inorganic polyphosphate (polyP) as a donor to convert ADP to ATP. Can also convert GDP to GTP, with lower efficiency.</text>
</comment>
<comment type="catalytic activity">
    <reaction evidence="1">
        <text>[phosphate](n) + ATP = [phosphate](n+1) + ADP</text>
        <dbReference type="Rhea" id="RHEA:19573"/>
        <dbReference type="Rhea" id="RHEA-COMP:9859"/>
        <dbReference type="Rhea" id="RHEA-COMP:14280"/>
        <dbReference type="ChEBI" id="CHEBI:16838"/>
        <dbReference type="ChEBI" id="CHEBI:30616"/>
        <dbReference type="ChEBI" id="CHEBI:456216"/>
    </reaction>
    <physiologicalReaction direction="right-to-left" evidence="1">
        <dbReference type="Rhea" id="RHEA:19575"/>
    </physiologicalReaction>
</comment>
<comment type="catalytic activity">
    <reaction evidence="1">
        <text>[phosphate](n) + GTP = [phosphate](n+1) + GDP</text>
        <dbReference type="Rhea" id="RHEA:55412"/>
        <dbReference type="Rhea" id="RHEA-COMP:9859"/>
        <dbReference type="Rhea" id="RHEA-COMP:14280"/>
        <dbReference type="ChEBI" id="CHEBI:16838"/>
        <dbReference type="ChEBI" id="CHEBI:37565"/>
        <dbReference type="ChEBI" id="CHEBI:58189"/>
    </reaction>
    <physiologicalReaction direction="right-to-left" evidence="1">
        <dbReference type="Rhea" id="RHEA:55414"/>
    </physiologicalReaction>
</comment>
<comment type="similarity">
    <text evidence="2">Belongs to the polyphosphate kinase 2 (PPK2) family. Class I subfamily.</text>
</comment>
<dbReference type="EC" id="2.7.4.-" evidence="1"/>
<dbReference type="EMBL" id="AE006469">
    <property type="protein sequence ID" value="AAK64750.1"/>
    <property type="molecule type" value="Genomic_DNA"/>
</dbReference>
<dbReference type="PIR" id="D95273">
    <property type="entry name" value="D95273"/>
</dbReference>
<dbReference type="RefSeq" id="NP_435338.1">
    <property type="nucleotide sequence ID" value="NC_003037.1"/>
</dbReference>
<dbReference type="SMR" id="Q930V2"/>
<dbReference type="EnsemblBacteria" id="AAK64750">
    <property type="protein sequence ID" value="AAK64750"/>
    <property type="gene ID" value="SMa0172"/>
</dbReference>
<dbReference type="KEGG" id="sme:SMa0172"/>
<dbReference type="PATRIC" id="fig|266834.11.peg.96"/>
<dbReference type="HOGENOM" id="CLU_048699_3_0_5"/>
<dbReference type="OrthoDB" id="9775224at2"/>
<dbReference type="Proteomes" id="UP000001976">
    <property type="component" value="Plasmid pSymA"/>
</dbReference>
<dbReference type="GO" id="GO:0008976">
    <property type="term" value="F:polyphosphate kinase activity"/>
    <property type="evidence" value="ECO:0007669"/>
    <property type="project" value="UniProtKB-EC"/>
</dbReference>
<dbReference type="GO" id="GO:0006754">
    <property type="term" value="P:ATP biosynthetic process"/>
    <property type="evidence" value="ECO:0007669"/>
    <property type="project" value="UniProtKB-KW"/>
</dbReference>
<dbReference type="Gene3D" id="3.40.50.300">
    <property type="entry name" value="P-loop containing nucleotide triphosphate hydrolases"/>
    <property type="match status" value="1"/>
</dbReference>
<dbReference type="InterPro" id="IPR027417">
    <property type="entry name" value="P-loop_NTPase"/>
</dbReference>
<dbReference type="InterPro" id="IPR016898">
    <property type="entry name" value="Polyphosphate_phosphotransfera"/>
</dbReference>
<dbReference type="InterPro" id="IPR022488">
    <property type="entry name" value="PPK2-related"/>
</dbReference>
<dbReference type="InterPro" id="IPR022486">
    <property type="entry name" value="PPK2_PA0141"/>
</dbReference>
<dbReference type="NCBIfam" id="TIGR03707">
    <property type="entry name" value="PPK2_P_aer"/>
    <property type="match status" value="1"/>
</dbReference>
<dbReference type="PANTHER" id="PTHR34383:SF1">
    <property type="entry name" value="ADP-POLYPHOSPHATE PHOSPHOTRANSFERASE"/>
    <property type="match status" value="1"/>
</dbReference>
<dbReference type="PANTHER" id="PTHR34383">
    <property type="entry name" value="POLYPHOSPHATE:AMP PHOSPHOTRANSFERASE-RELATED"/>
    <property type="match status" value="1"/>
</dbReference>
<dbReference type="Pfam" id="PF03976">
    <property type="entry name" value="PPK2"/>
    <property type="match status" value="1"/>
</dbReference>
<dbReference type="PIRSF" id="PIRSF028756">
    <property type="entry name" value="PPK2_prd"/>
    <property type="match status" value="1"/>
</dbReference>
<dbReference type="SUPFAM" id="SSF52540">
    <property type="entry name" value="P-loop containing nucleoside triphosphate hydrolases"/>
    <property type="match status" value="1"/>
</dbReference>
<accession>Q930V2</accession>
<geneLocation type="plasmid">
    <name>pSymA</name>
    <name>megaplasmid 1</name>
</geneLocation>
<gene>
    <name evidence="2" type="ordered locus">RA0092</name>
    <name evidence="3" type="ORF">SMa0172</name>
</gene>
<evidence type="ECO:0000269" key="1">
    <source>
    </source>
</evidence>
<evidence type="ECO:0000305" key="2"/>
<evidence type="ECO:0000312" key="3">
    <source>
        <dbReference type="EMBL" id="AAK64750.1"/>
    </source>
</evidence>
<name>PK21B_RHIME</name>
<organism>
    <name type="scientific">Rhizobium meliloti (strain 1021)</name>
    <name type="common">Ensifer meliloti</name>
    <name type="synonym">Sinorhizobium meliloti</name>
    <dbReference type="NCBI Taxonomy" id="266834"/>
    <lineage>
        <taxon>Bacteria</taxon>
        <taxon>Pseudomonadati</taxon>
        <taxon>Pseudomonadota</taxon>
        <taxon>Alphaproteobacteria</taxon>
        <taxon>Hyphomicrobiales</taxon>
        <taxon>Rhizobiaceae</taxon>
        <taxon>Sinorhizobium/Ensifer group</taxon>
        <taxon>Sinorhizobium</taxon>
    </lineage>
</organism>
<proteinExistence type="evidence at protein level"/>
<reference key="1">
    <citation type="journal article" date="2001" name="Proc. Natl. Acad. Sci. U.S.A.">
        <title>Nucleotide sequence and predicted functions of the entire Sinorhizobium meliloti pSymA megaplasmid.</title>
        <authorList>
            <person name="Barnett M.J."/>
            <person name="Fisher R.F."/>
            <person name="Jones T."/>
            <person name="Komp C."/>
            <person name="Abola A.P."/>
            <person name="Barloy-Hubler F."/>
            <person name="Bowser L."/>
            <person name="Capela D."/>
            <person name="Galibert F."/>
            <person name="Gouzy J."/>
            <person name="Gurjal M."/>
            <person name="Hong A."/>
            <person name="Huizar L."/>
            <person name="Hyman R.W."/>
            <person name="Kahn D."/>
            <person name="Kahn M.L."/>
            <person name="Kalman S."/>
            <person name="Keating D.H."/>
            <person name="Palm C."/>
            <person name="Peck M.C."/>
            <person name="Surzycki R."/>
            <person name="Wells D.H."/>
            <person name="Yeh K.-C."/>
            <person name="Davis R.W."/>
            <person name="Federspiel N.A."/>
            <person name="Long S.R."/>
        </authorList>
    </citation>
    <scope>NUCLEOTIDE SEQUENCE [LARGE SCALE GENOMIC DNA]</scope>
    <source>
        <strain>1021</strain>
    </source>
</reference>
<reference key="2">
    <citation type="journal article" date="2001" name="Science">
        <title>The composite genome of the legume symbiont Sinorhizobium meliloti.</title>
        <authorList>
            <person name="Galibert F."/>
            <person name="Finan T.M."/>
            <person name="Long S.R."/>
            <person name="Puehler A."/>
            <person name="Abola P."/>
            <person name="Ampe F."/>
            <person name="Barloy-Hubler F."/>
            <person name="Barnett M.J."/>
            <person name="Becker A."/>
            <person name="Boistard P."/>
            <person name="Bothe G."/>
            <person name="Boutry M."/>
            <person name="Bowser L."/>
            <person name="Buhrmester J."/>
            <person name="Cadieu E."/>
            <person name="Capela D."/>
            <person name="Chain P."/>
            <person name="Cowie A."/>
            <person name="Davis R.W."/>
            <person name="Dreano S."/>
            <person name="Federspiel N.A."/>
            <person name="Fisher R.F."/>
            <person name="Gloux S."/>
            <person name="Godrie T."/>
            <person name="Goffeau A."/>
            <person name="Golding B."/>
            <person name="Gouzy J."/>
            <person name="Gurjal M."/>
            <person name="Hernandez-Lucas I."/>
            <person name="Hong A."/>
            <person name="Huizar L."/>
            <person name="Hyman R.W."/>
            <person name="Jones T."/>
            <person name="Kahn D."/>
            <person name="Kahn M.L."/>
            <person name="Kalman S."/>
            <person name="Keating D.H."/>
            <person name="Kiss E."/>
            <person name="Komp C."/>
            <person name="Lelaure V."/>
            <person name="Masuy D."/>
            <person name="Palm C."/>
            <person name="Peck M.C."/>
            <person name="Pohl T.M."/>
            <person name="Portetelle D."/>
            <person name="Purnelle B."/>
            <person name="Ramsperger U."/>
            <person name="Surzycki R."/>
            <person name="Thebault P."/>
            <person name="Vandenbol M."/>
            <person name="Vorhoelter F.J."/>
            <person name="Weidner S."/>
            <person name="Wells D.H."/>
            <person name="Wong K."/>
            <person name="Yeh K.-C."/>
            <person name="Batut J."/>
        </authorList>
    </citation>
    <scope>NUCLEOTIDE SEQUENCE [LARGE SCALE GENOMIC DNA]</scope>
    <source>
        <strain>1021</strain>
    </source>
</reference>
<reference key="3">
    <citation type="journal article" date="2008" name="Proc. Natl. Acad. Sci. U.S.A.">
        <title>Polyphosphate-dependent synthesis of ATP and ADP by the family-2 polyphosphate kinases in bacteria.</title>
        <authorList>
            <person name="Nocek B."/>
            <person name="Kochinyan S."/>
            <person name="Proudfoot M."/>
            <person name="Brown G."/>
            <person name="Evdokimova E."/>
            <person name="Osipiuk J."/>
            <person name="Edwards A.M."/>
            <person name="Savchenko A."/>
            <person name="Joachimiak A."/>
            <person name="Yakunin A.F."/>
        </authorList>
    </citation>
    <scope>FUNCTION</scope>
    <scope>CATALYTIC ACTIVITY</scope>
</reference>
<keyword id="KW-0066">ATP synthesis</keyword>
<keyword id="KW-0418">Kinase</keyword>
<keyword id="KW-0614">Plasmid</keyword>
<keyword id="KW-1185">Reference proteome</keyword>
<keyword id="KW-0808">Transferase</keyword>